<keyword id="KW-0067">ATP-binding</keyword>
<keyword id="KW-0418">Kinase</keyword>
<keyword id="KW-0441">Lipid A biosynthesis</keyword>
<keyword id="KW-0444">Lipid biosynthesis</keyword>
<keyword id="KW-0443">Lipid metabolism</keyword>
<keyword id="KW-0547">Nucleotide-binding</keyword>
<keyword id="KW-0808">Transferase</keyword>
<proteinExistence type="inferred from homology"/>
<dbReference type="EC" id="2.7.1.130" evidence="1"/>
<dbReference type="EMBL" id="CP001600">
    <property type="protein sequence ID" value="ACR69621.1"/>
    <property type="molecule type" value="Genomic_DNA"/>
</dbReference>
<dbReference type="RefSeq" id="WP_015871736.1">
    <property type="nucleotide sequence ID" value="NZ_CP169062.1"/>
</dbReference>
<dbReference type="SMR" id="C5BAE1"/>
<dbReference type="STRING" id="67780.B6E78_04395"/>
<dbReference type="GeneID" id="69539369"/>
<dbReference type="KEGG" id="eic:NT01EI_2451"/>
<dbReference type="PATRIC" id="fig|634503.3.peg.2174"/>
<dbReference type="HOGENOM" id="CLU_038816_2_0_6"/>
<dbReference type="OrthoDB" id="9766423at2"/>
<dbReference type="UniPathway" id="UPA00359">
    <property type="reaction ID" value="UER00482"/>
</dbReference>
<dbReference type="Proteomes" id="UP000001485">
    <property type="component" value="Chromosome"/>
</dbReference>
<dbReference type="GO" id="GO:0005886">
    <property type="term" value="C:plasma membrane"/>
    <property type="evidence" value="ECO:0007669"/>
    <property type="project" value="TreeGrafter"/>
</dbReference>
<dbReference type="GO" id="GO:0005524">
    <property type="term" value="F:ATP binding"/>
    <property type="evidence" value="ECO:0007669"/>
    <property type="project" value="UniProtKB-UniRule"/>
</dbReference>
<dbReference type="GO" id="GO:0009029">
    <property type="term" value="F:tetraacyldisaccharide 4'-kinase activity"/>
    <property type="evidence" value="ECO:0007669"/>
    <property type="project" value="UniProtKB-UniRule"/>
</dbReference>
<dbReference type="GO" id="GO:0009245">
    <property type="term" value="P:lipid A biosynthetic process"/>
    <property type="evidence" value="ECO:0007669"/>
    <property type="project" value="UniProtKB-UniRule"/>
</dbReference>
<dbReference type="GO" id="GO:0009244">
    <property type="term" value="P:lipopolysaccharide core region biosynthetic process"/>
    <property type="evidence" value="ECO:0007669"/>
    <property type="project" value="TreeGrafter"/>
</dbReference>
<dbReference type="HAMAP" id="MF_00409">
    <property type="entry name" value="LpxK"/>
    <property type="match status" value="1"/>
</dbReference>
<dbReference type="InterPro" id="IPR003758">
    <property type="entry name" value="LpxK"/>
</dbReference>
<dbReference type="InterPro" id="IPR027417">
    <property type="entry name" value="P-loop_NTPase"/>
</dbReference>
<dbReference type="NCBIfam" id="TIGR00682">
    <property type="entry name" value="lpxK"/>
    <property type="match status" value="1"/>
</dbReference>
<dbReference type="PANTHER" id="PTHR42724">
    <property type="entry name" value="TETRAACYLDISACCHARIDE 4'-KINASE"/>
    <property type="match status" value="1"/>
</dbReference>
<dbReference type="PANTHER" id="PTHR42724:SF1">
    <property type="entry name" value="TETRAACYLDISACCHARIDE 4'-KINASE, MITOCHONDRIAL-RELATED"/>
    <property type="match status" value="1"/>
</dbReference>
<dbReference type="Pfam" id="PF02606">
    <property type="entry name" value="LpxK"/>
    <property type="match status" value="1"/>
</dbReference>
<dbReference type="SUPFAM" id="SSF52540">
    <property type="entry name" value="P-loop containing nucleoside triphosphate hydrolases"/>
    <property type="match status" value="1"/>
</dbReference>
<protein>
    <recommendedName>
        <fullName evidence="1">Tetraacyldisaccharide 4'-kinase</fullName>
        <ecNumber evidence="1">2.7.1.130</ecNumber>
    </recommendedName>
    <alternativeName>
        <fullName evidence="1">Lipid A 4'-kinase</fullName>
    </alternativeName>
</protein>
<sequence>MIARIWSGRSPLYLLLLPLSWLYGLVALLRRQAYRRGWIRVWRAPLPLVVVGNLTAGGNGKTPLVIWLVEQLQRRGYRVGVVSRGYGGRATCYPLVLGPDTRSVECGDEPLLIAQRTGARVAVAPQRSAAVQALLAQEPLDVVITDDGLQHYALARDMELVVIDGERRFGNGWWLPAGPMRERAARLCSVDAVIVNGGLPRTGEIPMALTGHTLVNLRSGERRVAGQFVTPVVAMAGIGHPPRFFHTLTQLGIPLQATHAFADHQAYQAQVLAALTPQAQPLLMTEKDAVKCRAFAQDNWWYLPVSATLPAEAGDRLLARIAALVAAQPRG</sequence>
<gene>
    <name evidence="1" type="primary">lpxK</name>
    <name type="ordered locus">NT01EI_2451</name>
</gene>
<evidence type="ECO:0000255" key="1">
    <source>
        <dbReference type="HAMAP-Rule" id="MF_00409"/>
    </source>
</evidence>
<name>LPXK_EDWI9</name>
<reference key="1">
    <citation type="submission" date="2009-03" db="EMBL/GenBank/DDBJ databases">
        <title>Complete genome sequence of Edwardsiella ictaluri 93-146.</title>
        <authorList>
            <person name="Williams M.L."/>
            <person name="Gillaspy A.F."/>
            <person name="Dyer D.W."/>
            <person name="Thune R.L."/>
            <person name="Waldbieser G.C."/>
            <person name="Schuster S.C."/>
            <person name="Gipson J."/>
            <person name="Zaitshik J."/>
            <person name="Landry C."/>
            <person name="Lawrence M.L."/>
        </authorList>
    </citation>
    <scope>NUCLEOTIDE SEQUENCE [LARGE SCALE GENOMIC DNA]</scope>
    <source>
        <strain>93-146</strain>
    </source>
</reference>
<accession>C5BAE1</accession>
<organism>
    <name type="scientific">Edwardsiella ictaluri (strain 93-146)</name>
    <dbReference type="NCBI Taxonomy" id="634503"/>
    <lineage>
        <taxon>Bacteria</taxon>
        <taxon>Pseudomonadati</taxon>
        <taxon>Pseudomonadota</taxon>
        <taxon>Gammaproteobacteria</taxon>
        <taxon>Enterobacterales</taxon>
        <taxon>Hafniaceae</taxon>
        <taxon>Edwardsiella</taxon>
    </lineage>
</organism>
<comment type="function">
    <text evidence="1">Transfers the gamma-phosphate of ATP to the 4'-position of a tetraacyldisaccharide 1-phosphate intermediate (termed DS-1-P) to form tetraacyldisaccharide 1,4'-bis-phosphate (lipid IVA).</text>
</comment>
<comment type="catalytic activity">
    <reaction evidence="1">
        <text>a lipid A disaccharide + ATP = a lipid IVA + ADP + H(+)</text>
        <dbReference type="Rhea" id="RHEA:67840"/>
        <dbReference type="ChEBI" id="CHEBI:15378"/>
        <dbReference type="ChEBI" id="CHEBI:30616"/>
        <dbReference type="ChEBI" id="CHEBI:176343"/>
        <dbReference type="ChEBI" id="CHEBI:176425"/>
        <dbReference type="ChEBI" id="CHEBI:456216"/>
        <dbReference type="EC" id="2.7.1.130"/>
    </reaction>
</comment>
<comment type="pathway">
    <text evidence="1">Glycolipid biosynthesis; lipid IV(A) biosynthesis; lipid IV(A) from (3R)-3-hydroxytetradecanoyl-[acyl-carrier-protein] and UDP-N-acetyl-alpha-D-glucosamine: step 6/6.</text>
</comment>
<comment type="similarity">
    <text evidence="1">Belongs to the LpxK family.</text>
</comment>
<feature type="chain" id="PRO_1000205968" description="Tetraacyldisaccharide 4'-kinase">
    <location>
        <begin position="1"/>
        <end position="331"/>
    </location>
</feature>
<feature type="binding site" evidence="1">
    <location>
        <begin position="55"/>
        <end position="62"/>
    </location>
    <ligand>
        <name>ATP</name>
        <dbReference type="ChEBI" id="CHEBI:30616"/>
    </ligand>
</feature>